<evidence type="ECO:0000255" key="1"/>
<evidence type="ECO:0000256" key="2">
    <source>
        <dbReference type="SAM" id="MobiDB-lite"/>
    </source>
</evidence>
<evidence type="ECO:0000305" key="3"/>
<name>YAO8_SCHPO</name>
<organism>
    <name type="scientific">Schizosaccharomyces pombe (strain 972 / ATCC 24843)</name>
    <name type="common">Fission yeast</name>
    <dbReference type="NCBI Taxonomy" id="284812"/>
    <lineage>
        <taxon>Eukaryota</taxon>
        <taxon>Fungi</taxon>
        <taxon>Dikarya</taxon>
        <taxon>Ascomycota</taxon>
        <taxon>Taphrinomycotina</taxon>
        <taxon>Schizosaccharomycetes</taxon>
        <taxon>Schizosaccharomycetales</taxon>
        <taxon>Schizosaccharomycetaceae</taxon>
        <taxon>Schizosaccharomyces</taxon>
    </lineage>
</organism>
<sequence length="550" mass="59918">MSDIDKESLKQNQKQWENEVELGESREANQDDELLMSLGYKPEFTREFSYVSIFGQSFGSMGLCPAMAGSLIFSMNCGGGGMVWSWIIGCICLIPVSISLGELASSMPTSGGLYFWIFTLASPSSRAFLCWVCGYVSVLGYATIYASTVYSASSMVQALAVIGSPSYSPTKYEQYGIYAALLFVISAMTAIPSRVIAKVNIINITFQFLVSIILIIALAAGSDSTTRNSGSFIFGDFTNYSGWSNMGWAFILSFTTPVWVVSGFESSAAVAEESTNAAKAAPFAMISSLGVATILGWCIVITVVATMGHDFNAILGSSLGQPVAQVLVNNVGNKGALGIFSLLVIALCLNCISLLIAASREVFAFCRDGGIPGSRYLRLLTKQKVPLNAILLVLLYSLLVGLLILVNVTAISSVFNLAIIALYIAYSGPLMCRFVYNKFQPGVFYVGKWSKPAALWSLVWMWFMILMLLFPQYQKPNQDEMNWAIVVLGFVMVFCVVYYYLPKIGGKTFFTGPIPTVQQENEYISGVPLNELSLSSLPLPKDFDQKQITE</sequence>
<proteinExistence type="inferred from homology"/>
<comment type="subcellular location">
    <subcellularLocation>
        <location evidence="3">Membrane</location>
        <topology evidence="3">Multi-pass membrane protein</topology>
    </subcellularLocation>
</comment>
<comment type="similarity">
    <text evidence="3">Belongs to the amino acid-polyamine-organocation (APC) superfamily.</text>
</comment>
<gene>
    <name type="ORF">SPAC11D3.08c</name>
</gene>
<keyword id="KW-0029">Amino-acid transport</keyword>
<keyword id="KW-0472">Membrane</keyword>
<keyword id="KW-1185">Reference proteome</keyword>
<keyword id="KW-0812">Transmembrane</keyword>
<keyword id="KW-1133">Transmembrane helix</keyword>
<keyword id="KW-0813">Transport</keyword>
<reference key="1">
    <citation type="journal article" date="2002" name="Nature">
        <title>The genome sequence of Schizosaccharomyces pombe.</title>
        <authorList>
            <person name="Wood V."/>
            <person name="Gwilliam R."/>
            <person name="Rajandream M.A."/>
            <person name="Lyne M.H."/>
            <person name="Lyne R."/>
            <person name="Stewart A."/>
            <person name="Sgouros J.G."/>
            <person name="Peat N."/>
            <person name="Hayles J."/>
            <person name="Baker S.G."/>
            <person name="Basham D."/>
            <person name="Bowman S."/>
            <person name="Brooks K."/>
            <person name="Brown D."/>
            <person name="Brown S."/>
            <person name="Chillingworth T."/>
            <person name="Churcher C.M."/>
            <person name="Collins M."/>
            <person name="Connor R."/>
            <person name="Cronin A."/>
            <person name="Davis P."/>
            <person name="Feltwell T."/>
            <person name="Fraser A."/>
            <person name="Gentles S."/>
            <person name="Goble A."/>
            <person name="Hamlin N."/>
            <person name="Harris D.E."/>
            <person name="Hidalgo J."/>
            <person name="Hodgson G."/>
            <person name="Holroyd S."/>
            <person name="Hornsby T."/>
            <person name="Howarth S."/>
            <person name="Huckle E.J."/>
            <person name="Hunt S."/>
            <person name="Jagels K."/>
            <person name="James K.D."/>
            <person name="Jones L."/>
            <person name="Jones M."/>
            <person name="Leather S."/>
            <person name="McDonald S."/>
            <person name="McLean J."/>
            <person name="Mooney P."/>
            <person name="Moule S."/>
            <person name="Mungall K.L."/>
            <person name="Murphy L.D."/>
            <person name="Niblett D."/>
            <person name="Odell C."/>
            <person name="Oliver K."/>
            <person name="O'Neil S."/>
            <person name="Pearson D."/>
            <person name="Quail M.A."/>
            <person name="Rabbinowitsch E."/>
            <person name="Rutherford K.M."/>
            <person name="Rutter S."/>
            <person name="Saunders D."/>
            <person name="Seeger K."/>
            <person name="Sharp S."/>
            <person name="Skelton J."/>
            <person name="Simmonds M.N."/>
            <person name="Squares R."/>
            <person name="Squares S."/>
            <person name="Stevens K."/>
            <person name="Taylor K."/>
            <person name="Taylor R.G."/>
            <person name="Tivey A."/>
            <person name="Walsh S.V."/>
            <person name="Warren T."/>
            <person name="Whitehead S."/>
            <person name="Woodward J.R."/>
            <person name="Volckaert G."/>
            <person name="Aert R."/>
            <person name="Robben J."/>
            <person name="Grymonprez B."/>
            <person name="Weltjens I."/>
            <person name="Vanstreels E."/>
            <person name="Rieger M."/>
            <person name="Schaefer M."/>
            <person name="Mueller-Auer S."/>
            <person name="Gabel C."/>
            <person name="Fuchs M."/>
            <person name="Duesterhoeft A."/>
            <person name="Fritzc C."/>
            <person name="Holzer E."/>
            <person name="Moestl D."/>
            <person name="Hilbert H."/>
            <person name="Borzym K."/>
            <person name="Langer I."/>
            <person name="Beck A."/>
            <person name="Lehrach H."/>
            <person name="Reinhardt R."/>
            <person name="Pohl T.M."/>
            <person name="Eger P."/>
            <person name="Zimmermann W."/>
            <person name="Wedler H."/>
            <person name="Wambutt R."/>
            <person name="Purnelle B."/>
            <person name="Goffeau A."/>
            <person name="Cadieu E."/>
            <person name="Dreano S."/>
            <person name="Gloux S."/>
            <person name="Lelaure V."/>
            <person name="Mottier S."/>
            <person name="Galibert F."/>
            <person name="Aves S.J."/>
            <person name="Xiang Z."/>
            <person name="Hunt C."/>
            <person name="Moore K."/>
            <person name="Hurst S.M."/>
            <person name="Lucas M."/>
            <person name="Rochet M."/>
            <person name="Gaillardin C."/>
            <person name="Tallada V.A."/>
            <person name="Garzon A."/>
            <person name="Thode G."/>
            <person name="Daga R.R."/>
            <person name="Cruzado L."/>
            <person name="Jimenez J."/>
            <person name="Sanchez M."/>
            <person name="del Rey F."/>
            <person name="Benito J."/>
            <person name="Dominguez A."/>
            <person name="Revuelta J.L."/>
            <person name="Moreno S."/>
            <person name="Armstrong J."/>
            <person name="Forsburg S.L."/>
            <person name="Cerutti L."/>
            <person name="Lowe T."/>
            <person name="McCombie W.R."/>
            <person name="Paulsen I."/>
            <person name="Potashkin J."/>
            <person name="Shpakovski G.V."/>
            <person name="Ussery D."/>
            <person name="Barrell B.G."/>
            <person name="Nurse P."/>
        </authorList>
    </citation>
    <scope>NUCLEOTIDE SEQUENCE [LARGE SCALE GENOMIC DNA]</scope>
    <source>
        <strain>972 / ATCC 24843</strain>
    </source>
</reference>
<dbReference type="EMBL" id="CU329670">
    <property type="protein sequence ID" value="CAA92309.1"/>
    <property type="molecule type" value="Genomic_DNA"/>
</dbReference>
<dbReference type="PIR" id="T37519">
    <property type="entry name" value="T37519"/>
</dbReference>
<dbReference type="RefSeq" id="NP_592805.1">
    <property type="nucleotide sequence ID" value="NM_001018205.2"/>
</dbReference>
<dbReference type="SMR" id="Q10087"/>
<dbReference type="FunCoup" id="Q10087">
    <property type="interactions" value="24"/>
</dbReference>
<dbReference type="STRING" id="284812.Q10087"/>
<dbReference type="iPTMnet" id="Q10087"/>
<dbReference type="PaxDb" id="4896-SPAC11D3.08c.1"/>
<dbReference type="EnsemblFungi" id="SPAC11D3.08c.1">
    <property type="protein sequence ID" value="SPAC11D3.08c.1:pep"/>
    <property type="gene ID" value="SPAC11D3.08c"/>
</dbReference>
<dbReference type="KEGG" id="spo:2542911"/>
<dbReference type="PomBase" id="SPAC11D3.08c"/>
<dbReference type="VEuPathDB" id="FungiDB:SPAC11D3.08c"/>
<dbReference type="eggNOG" id="KOG1289">
    <property type="taxonomic scope" value="Eukaryota"/>
</dbReference>
<dbReference type="HOGENOM" id="CLU_004495_0_3_1"/>
<dbReference type="InParanoid" id="Q10087"/>
<dbReference type="OMA" id="CWLAGYM"/>
<dbReference type="PhylomeDB" id="Q10087"/>
<dbReference type="PRO" id="PR:Q10087"/>
<dbReference type="Proteomes" id="UP000002485">
    <property type="component" value="Chromosome I"/>
</dbReference>
<dbReference type="GO" id="GO:0016020">
    <property type="term" value="C:membrane"/>
    <property type="evidence" value="ECO:0007669"/>
    <property type="project" value="UniProtKB-SubCell"/>
</dbReference>
<dbReference type="GO" id="GO:0015171">
    <property type="term" value="F:amino acid transmembrane transporter activity"/>
    <property type="evidence" value="ECO:0000255"/>
    <property type="project" value="PomBase"/>
</dbReference>
<dbReference type="GO" id="GO:0015185">
    <property type="term" value="F:gamma-aminobutyric acid transmembrane transporter activity"/>
    <property type="evidence" value="ECO:0000318"/>
    <property type="project" value="GO_Central"/>
</dbReference>
<dbReference type="GO" id="GO:0003333">
    <property type="term" value="P:amino acid transmembrane transport"/>
    <property type="evidence" value="ECO:0000255"/>
    <property type="project" value="PomBase"/>
</dbReference>
<dbReference type="GO" id="GO:0015812">
    <property type="term" value="P:gamma-aminobutyric acid transport"/>
    <property type="evidence" value="ECO:0000318"/>
    <property type="project" value="GO_Central"/>
</dbReference>
<dbReference type="FunFam" id="1.20.1740.10:FF:000046">
    <property type="entry name" value="Amino-acid permease, putative"/>
    <property type="match status" value="1"/>
</dbReference>
<dbReference type="Gene3D" id="1.20.1740.10">
    <property type="entry name" value="Amino acid/polyamine transporter I"/>
    <property type="match status" value="1"/>
</dbReference>
<dbReference type="InterPro" id="IPR002293">
    <property type="entry name" value="AA/rel_permease1"/>
</dbReference>
<dbReference type="InterPro" id="IPR004840">
    <property type="entry name" value="Amino_acid_permease_CS"/>
</dbReference>
<dbReference type="PANTHER" id="PTHR45649">
    <property type="entry name" value="AMINO-ACID PERMEASE BAT1"/>
    <property type="match status" value="1"/>
</dbReference>
<dbReference type="PANTHER" id="PTHR45649:SF6">
    <property type="entry name" value="GABA-SPECIFIC PERMEASE"/>
    <property type="match status" value="1"/>
</dbReference>
<dbReference type="Pfam" id="PF13520">
    <property type="entry name" value="AA_permease_2"/>
    <property type="match status" value="1"/>
</dbReference>
<dbReference type="PIRSF" id="PIRSF006060">
    <property type="entry name" value="AA_transporter"/>
    <property type="match status" value="1"/>
</dbReference>
<dbReference type="PROSITE" id="PS00218">
    <property type="entry name" value="AMINO_ACID_PERMEASE_1"/>
    <property type="match status" value="1"/>
</dbReference>
<protein>
    <recommendedName>
        <fullName>Uncharacterized amino-acid permease C11D3.08c</fullName>
    </recommendedName>
</protein>
<feature type="chain" id="PRO_0000054170" description="Uncharacterized amino-acid permease C11D3.08c">
    <location>
        <begin position="1"/>
        <end position="550"/>
    </location>
</feature>
<feature type="transmembrane region" description="Helical" evidence="1">
    <location>
        <begin position="53"/>
        <end position="73"/>
    </location>
</feature>
<feature type="transmembrane region" description="Helical" evidence="1">
    <location>
        <begin position="78"/>
        <end position="98"/>
    </location>
</feature>
<feature type="transmembrane region" description="Helical" evidence="1">
    <location>
        <begin position="127"/>
        <end position="147"/>
    </location>
</feature>
<feature type="transmembrane region" description="Helical" evidence="1">
    <location>
        <begin position="177"/>
        <end position="197"/>
    </location>
</feature>
<feature type="transmembrane region" description="Helical" evidence="1">
    <location>
        <begin position="201"/>
        <end position="221"/>
    </location>
</feature>
<feature type="transmembrane region" description="Helical" evidence="1">
    <location>
        <begin position="246"/>
        <end position="266"/>
    </location>
</feature>
<feature type="transmembrane region" description="Helical" evidence="1">
    <location>
        <begin position="283"/>
        <end position="303"/>
    </location>
</feature>
<feature type="transmembrane region" description="Helical" evidence="1">
    <location>
        <begin position="336"/>
        <end position="356"/>
    </location>
</feature>
<feature type="transmembrane region" description="Helical" evidence="1">
    <location>
        <begin position="386"/>
        <end position="406"/>
    </location>
</feature>
<feature type="transmembrane region" description="Helical" evidence="1">
    <location>
        <begin position="411"/>
        <end position="431"/>
    </location>
</feature>
<feature type="transmembrane region" description="Helical" evidence="1">
    <location>
        <begin position="453"/>
        <end position="473"/>
    </location>
</feature>
<feature type="transmembrane region" description="Helical" evidence="1">
    <location>
        <begin position="481"/>
        <end position="501"/>
    </location>
</feature>
<feature type="region of interest" description="Disordered" evidence="2">
    <location>
        <begin position="1"/>
        <end position="24"/>
    </location>
</feature>
<accession>Q10087</accession>